<keyword id="KW-0001">2Fe-2S</keyword>
<keyword id="KW-0963">Cytoplasm</keyword>
<keyword id="KW-0903">Direct protein sequencing</keyword>
<keyword id="KW-0249">Electron transport</keyword>
<keyword id="KW-0408">Iron</keyword>
<keyword id="KW-0411">Iron-sulfur</keyword>
<keyword id="KW-0479">Metal-binding</keyword>
<keyword id="KW-0560">Oxidoreductase</keyword>
<keyword id="KW-1185">Reference proteome</keyword>
<keyword id="KW-0813">Transport</keyword>
<gene>
    <name type="primary">mvhD</name>
    <name type="ordered locus">Arcpr_1552</name>
</gene>
<evidence type="ECO:0000269" key="1">
    <source>
    </source>
</evidence>
<evidence type="ECO:0000305" key="2"/>
<comment type="function">
    <text evidence="1">Part of a complex that provides reducing equivalents for heterodisulfide reductase. MvhD may form the contact site for heterodisulfide reductase.</text>
</comment>
<comment type="cofactor">
    <cofactor evidence="1">
        <name>[2Fe-2S] cluster</name>
        <dbReference type="ChEBI" id="CHEBI:190135"/>
    </cofactor>
    <text evidence="1">Binds 1 [2Fe-2S] cluster.</text>
</comment>
<comment type="subunit">
    <text evidence="1">The F420-non-reducing hydrogenase is composed of three subunits; MvhA, MvhD and MvhG. It forms a complex with the heterodisulfide reductase (Hdr).</text>
</comment>
<comment type="subcellular location">
    <subcellularLocation>
        <location evidence="1">Cytoplasm</location>
    </subcellularLocation>
</comment>
<comment type="similarity">
    <text evidence="2">Belongs to the MvhD/VhuD family.</text>
</comment>
<sequence length="137" mass="15486">MSEEWEPNIVCIACNWCTYQAADMAGSLRYSYPPTVKVVRVPCSGRVEPEFIVEALTNGADGVIVGGCHLGDCHYKEGNYKALRRFKLLHKLLTELGIEPERVRLEWISGSEGLKFAEVMTEFDATIRKLGPFKFER</sequence>
<reference key="1">
    <citation type="journal article" date="2010" name="Stand. Genomic Sci.">
        <title>Complete genome sequence of Archaeoglobus profundus type strain (AV18).</title>
        <authorList>
            <person name="von Jan M."/>
            <person name="Lapidus A."/>
            <person name="Del Rio T.G."/>
            <person name="Copeland A."/>
            <person name="Tice H."/>
            <person name="Cheng J.F."/>
            <person name="Lucas S."/>
            <person name="Chen F."/>
            <person name="Nolan M."/>
            <person name="Goodwin L."/>
            <person name="Han C."/>
            <person name="Pitluck S."/>
            <person name="Liolios K."/>
            <person name="Ivanova N."/>
            <person name="Mavromatis K."/>
            <person name="Ovchinnikova G."/>
            <person name="Chertkov O."/>
            <person name="Pati A."/>
            <person name="Chen A."/>
            <person name="Palaniappan K."/>
            <person name="Land M."/>
            <person name="Hauser L."/>
            <person name="Chang Y.J."/>
            <person name="Jeffries C.D."/>
            <person name="Saunders E."/>
            <person name="Brettin T."/>
            <person name="Detter J.C."/>
            <person name="Chain P."/>
            <person name="Eichinger K."/>
            <person name="Huber H."/>
            <person name="Spring S."/>
            <person name="Rohde M."/>
            <person name="Goker M."/>
            <person name="Wirth R."/>
            <person name="Woyke T."/>
            <person name="Bristow J."/>
            <person name="Eisen J.A."/>
            <person name="Markowitz V."/>
            <person name="Hugenholtz P."/>
            <person name="Kyrpides N.C."/>
            <person name="Klenk H.P."/>
        </authorList>
    </citation>
    <scope>NUCLEOTIDE SEQUENCE [LARGE SCALE GENOMIC DNA]</scope>
    <source>
        <strain>DSM 5631 / JCM 9629 / NBRC 100127 / Av18</strain>
    </source>
</reference>
<reference evidence="2" key="2">
    <citation type="journal article" date="2004" name="Eur. J. Biochem.">
        <title>Two distinct heterodisulfide reductase-like enzymes in the sulfate-reducing archaeon Archaeoglobus profundus.</title>
        <authorList>
            <person name="Mander G.J."/>
            <person name="Pierik A.J."/>
            <person name="Huber H."/>
            <person name="Hedderich R."/>
        </authorList>
    </citation>
    <scope>PROTEIN SEQUENCE OF 2-20</scope>
    <scope>COFACTOR</scope>
    <scope>INTERACTION WITH HETERODISULFIDE REDUCTASE</scope>
    <scope>SUBCELLULAR LOCATION</scope>
</reference>
<dbReference type="EC" id="1.12.99.-"/>
<dbReference type="EMBL" id="CP001857">
    <property type="protein sequence ID" value="ADB58598.1"/>
    <property type="molecule type" value="Genomic_DNA"/>
</dbReference>
<dbReference type="RefSeq" id="WP_012940934.1">
    <property type="nucleotide sequence ID" value="NC_013741.1"/>
</dbReference>
<dbReference type="SMR" id="P84624"/>
<dbReference type="STRING" id="572546.Arcpr_1552"/>
<dbReference type="PaxDb" id="572546-Arcpr_1552"/>
<dbReference type="GeneID" id="8740242"/>
<dbReference type="KEGG" id="apo:Arcpr_1552"/>
<dbReference type="eggNOG" id="arCOG02475">
    <property type="taxonomic scope" value="Archaea"/>
</dbReference>
<dbReference type="HOGENOM" id="CLU_095272_2_0_2"/>
<dbReference type="OrthoDB" id="371828at2157"/>
<dbReference type="Proteomes" id="UP000001901">
    <property type="component" value="Chromosome"/>
</dbReference>
<dbReference type="GO" id="GO:0005737">
    <property type="term" value="C:cytoplasm"/>
    <property type="evidence" value="ECO:0007669"/>
    <property type="project" value="UniProtKB-SubCell"/>
</dbReference>
<dbReference type="GO" id="GO:0051537">
    <property type="term" value="F:2 iron, 2 sulfur cluster binding"/>
    <property type="evidence" value="ECO:0007669"/>
    <property type="project" value="UniProtKB-KW"/>
</dbReference>
<dbReference type="GO" id="GO:0046872">
    <property type="term" value="F:metal ion binding"/>
    <property type="evidence" value="ECO:0007669"/>
    <property type="project" value="UniProtKB-KW"/>
</dbReference>
<dbReference type="GO" id="GO:0016491">
    <property type="term" value="F:oxidoreductase activity"/>
    <property type="evidence" value="ECO:0007669"/>
    <property type="project" value="UniProtKB-KW"/>
</dbReference>
<dbReference type="InterPro" id="IPR003813">
    <property type="entry name" value="MvhD/FlpD"/>
</dbReference>
<dbReference type="Pfam" id="PF02662">
    <property type="entry name" value="FlpD"/>
    <property type="match status" value="1"/>
</dbReference>
<protein>
    <recommendedName>
        <fullName>F420-non-reducing hydrogenase iron-sulfur subunit D</fullName>
        <ecNumber>1.12.99.-</ecNumber>
    </recommendedName>
</protein>
<proteinExistence type="evidence at protein level"/>
<accession>P84624</accession>
<accession>D2REQ4</accession>
<feature type="chain" id="PRO_0000218276" description="F420-non-reducing hydrogenase iron-sulfur subunit D">
    <location>
        <begin position="1"/>
        <end position="137"/>
    </location>
</feature>
<feature type="sequence conflict" description="In Ref. 2; AA sequence." evidence="2" ref="2">
    <original>VCIAC</original>
    <variation>IVAA</variation>
    <location>
        <begin position="10"/>
        <end position="14"/>
    </location>
</feature>
<organism>
    <name type="scientific">Archaeoglobus profundus (strain DSM 5631 / JCM 9629 / NBRC 100127 / Av18)</name>
    <dbReference type="NCBI Taxonomy" id="572546"/>
    <lineage>
        <taxon>Archaea</taxon>
        <taxon>Methanobacteriati</taxon>
        <taxon>Methanobacteriota</taxon>
        <taxon>Archaeoglobi</taxon>
        <taxon>Archaeoglobales</taxon>
        <taxon>Archaeoglobaceae</taxon>
        <taxon>Archaeoglobus</taxon>
    </lineage>
</organism>
<name>VHCD_ARCPA</name>